<sequence length="176" mass="18788">MNAEKDSPLPKPQWVYRVGIGQDSHRFLSESSAKPCILAGVIFENSPGFQANSDGDIVFHAICNAISSVTHRIILGDVADELFHTRGITDSSIYLSEAIKSLKPNQLISHVAITIEGNRPKFLPKLSAMRQSIASALNISLGSVGITATSGEGLSDFGCGDGVQCFCVLTVMEYCG</sequence>
<organism>
    <name type="scientific">Chlamydia felis (strain Fe/C-56)</name>
    <name type="common">Chlamydophila felis</name>
    <dbReference type="NCBI Taxonomy" id="264202"/>
    <lineage>
        <taxon>Bacteria</taxon>
        <taxon>Pseudomonadati</taxon>
        <taxon>Chlamydiota</taxon>
        <taxon>Chlamydiia</taxon>
        <taxon>Chlamydiales</taxon>
        <taxon>Chlamydiaceae</taxon>
        <taxon>Chlamydia/Chlamydophila group</taxon>
        <taxon>Chlamydia</taxon>
    </lineage>
</organism>
<feature type="chain" id="PRO_1000022819" description="2-C-methyl-D-erythritol 2,4-cyclodiphosphate synthase">
    <location>
        <begin position="1"/>
        <end position="176"/>
    </location>
</feature>
<feature type="binding site" evidence="1">
    <location>
        <begin position="23"/>
        <end position="25"/>
    </location>
    <ligand>
        <name>4-CDP-2-C-methyl-D-erythritol 2-phosphate</name>
        <dbReference type="ChEBI" id="CHEBI:57919"/>
    </ligand>
</feature>
<feature type="binding site" evidence="1">
    <location>
        <position position="23"/>
    </location>
    <ligand>
        <name>a divalent metal cation</name>
        <dbReference type="ChEBI" id="CHEBI:60240"/>
    </ligand>
</feature>
<feature type="binding site" evidence="1">
    <location>
        <position position="25"/>
    </location>
    <ligand>
        <name>a divalent metal cation</name>
        <dbReference type="ChEBI" id="CHEBI:60240"/>
    </ligand>
</feature>
<feature type="binding site" evidence="1">
    <location>
        <position position="60"/>
    </location>
    <ligand>
        <name>a divalent metal cation</name>
        <dbReference type="ChEBI" id="CHEBI:60240"/>
    </ligand>
</feature>
<feature type="binding site" evidence="1">
    <location>
        <begin position="149"/>
        <end position="152"/>
    </location>
    <ligand>
        <name>4-CDP-2-C-methyl-D-erythritol 2-phosphate</name>
        <dbReference type="ChEBI" id="CHEBI:57919"/>
    </ligand>
</feature>
<feature type="site" description="Transition state stabilizer" evidence="1">
    <location>
        <position position="52"/>
    </location>
</feature>
<feature type="site" description="Transition state stabilizer" evidence="1">
    <location>
        <position position="150"/>
    </location>
</feature>
<name>ISPF_CHLFF</name>
<protein>
    <recommendedName>
        <fullName evidence="1">2-C-methyl-D-erythritol 2,4-cyclodiphosphate synthase</fullName>
        <shortName evidence="1">MECDP-synthase</shortName>
        <shortName evidence="1">MECPP-synthase</shortName>
        <shortName evidence="1">MECPS</shortName>
        <ecNumber evidence="1">4.6.1.12</ecNumber>
    </recommendedName>
</protein>
<comment type="function">
    <text evidence="1">Involved in the biosynthesis of isopentenyl diphosphate (IPP) and dimethylallyl diphosphate (DMAPP), two major building blocks of isoprenoid compounds. Catalyzes the conversion of 4-diphosphocytidyl-2-C-methyl-D-erythritol 2-phosphate (CDP-ME2P) to 2-C-methyl-D-erythritol 2,4-cyclodiphosphate (ME-CPP) with a corresponding release of cytidine 5-monophosphate (CMP).</text>
</comment>
<comment type="catalytic activity">
    <reaction evidence="1">
        <text>4-CDP-2-C-methyl-D-erythritol 2-phosphate = 2-C-methyl-D-erythritol 2,4-cyclic diphosphate + CMP</text>
        <dbReference type="Rhea" id="RHEA:23864"/>
        <dbReference type="ChEBI" id="CHEBI:57919"/>
        <dbReference type="ChEBI" id="CHEBI:58483"/>
        <dbReference type="ChEBI" id="CHEBI:60377"/>
        <dbReference type="EC" id="4.6.1.12"/>
    </reaction>
</comment>
<comment type="cofactor">
    <cofactor evidence="1">
        <name>a divalent metal cation</name>
        <dbReference type="ChEBI" id="CHEBI:60240"/>
    </cofactor>
    <text evidence="1">Binds 1 divalent metal cation per subunit.</text>
</comment>
<comment type="pathway">
    <text evidence="1">Isoprenoid biosynthesis; isopentenyl diphosphate biosynthesis via DXP pathway; isopentenyl diphosphate from 1-deoxy-D-xylulose 5-phosphate: step 4/6.</text>
</comment>
<comment type="subunit">
    <text evidence="1">Homotrimer.</text>
</comment>
<comment type="similarity">
    <text evidence="1">Belongs to the IspF family.</text>
</comment>
<dbReference type="EC" id="4.6.1.12" evidence="1"/>
<dbReference type="EMBL" id="AP006861">
    <property type="protein sequence ID" value="BAE81584.1"/>
    <property type="molecule type" value="Genomic_DNA"/>
</dbReference>
<dbReference type="RefSeq" id="WP_011458361.1">
    <property type="nucleotide sequence ID" value="NC_007899.1"/>
</dbReference>
<dbReference type="SMR" id="Q253F4"/>
<dbReference type="STRING" id="264202.CF0812"/>
<dbReference type="KEGG" id="cfe:CF0812"/>
<dbReference type="eggNOG" id="COG0245">
    <property type="taxonomic scope" value="Bacteria"/>
</dbReference>
<dbReference type="HOGENOM" id="CLU_084630_2_0_0"/>
<dbReference type="OrthoDB" id="9804336at2"/>
<dbReference type="UniPathway" id="UPA00056">
    <property type="reaction ID" value="UER00095"/>
</dbReference>
<dbReference type="Proteomes" id="UP000001260">
    <property type="component" value="Chromosome"/>
</dbReference>
<dbReference type="GO" id="GO:0008685">
    <property type="term" value="F:2-C-methyl-D-erythritol 2,4-cyclodiphosphate synthase activity"/>
    <property type="evidence" value="ECO:0007669"/>
    <property type="project" value="UniProtKB-UniRule"/>
</dbReference>
<dbReference type="GO" id="GO:0046872">
    <property type="term" value="F:metal ion binding"/>
    <property type="evidence" value="ECO:0007669"/>
    <property type="project" value="UniProtKB-KW"/>
</dbReference>
<dbReference type="GO" id="GO:0019288">
    <property type="term" value="P:isopentenyl diphosphate biosynthetic process, methylerythritol 4-phosphate pathway"/>
    <property type="evidence" value="ECO:0007669"/>
    <property type="project" value="UniProtKB-UniRule"/>
</dbReference>
<dbReference type="GO" id="GO:0016114">
    <property type="term" value="P:terpenoid biosynthetic process"/>
    <property type="evidence" value="ECO:0007669"/>
    <property type="project" value="InterPro"/>
</dbReference>
<dbReference type="CDD" id="cd00554">
    <property type="entry name" value="MECDP_synthase"/>
    <property type="match status" value="1"/>
</dbReference>
<dbReference type="Gene3D" id="3.30.1330.50">
    <property type="entry name" value="2-C-methyl-D-erythritol 2,4-cyclodiphosphate synthase"/>
    <property type="match status" value="1"/>
</dbReference>
<dbReference type="HAMAP" id="MF_00107">
    <property type="entry name" value="IspF"/>
    <property type="match status" value="1"/>
</dbReference>
<dbReference type="InterPro" id="IPR003526">
    <property type="entry name" value="MECDP_synthase"/>
</dbReference>
<dbReference type="InterPro" id="IPR020555">
    <property type="entry name" value="MECDP_synthase_CS"/>
</dbReference>
<dbReference type="InterPro" id="IPR036571">
    <property type="entry name" value="MECDP_synthase_sf"/>
</dbReference>
<dbReference type="NCBIfam" id="TIGR00151">
    <property type="entry name" value="ispF"/>
    <property type="match status" value="1"/>
</dbReference>
<dbReference type="PANTHER" id="PTHR43181">
    <property type="entry name" value="2-C-METHYL-D-ERYTHRITOL 2,4-CYCLODIPHOSPHATE SYNTHASE, CHLOROPLASTIC"/>
    <property type="match status" value="1"/>
</dbReference>
<dbReference type="PANTHER" id="PTHR43181:SF1">
    <property type="entry name" value="2-C-METHYL-D-ERYTHRITOL 2,4-CYCLODIPHOSPHATE SYNTHASE, CHLOROPLASTIC"/>
    <property type="match status" value="1"/>
</dbReference>
<dbReference type="Pfam" id="PF02542">
    <property type="entry name" value="YgbB"/>
    <property type="match status" value="1"/>
</dbReference>
<dbReference type="SUPFAM" id="SSF69765">
    <property type="entry name" value="IpsF-like"/>
    <property type="match status" value="1"/>
</dbReference>
<dbReference type="PROSITE" id="PS01350">
    <property type="entry name" value="ISPF"/>
    <property type="match status" value="1"/>
</dbReference>
<keyword id="KW-0414">Isoprene biosynthesis</keyword>
<keyword id="KW-0456">Lyase</keyword>
<keyword id="KW-0479">Metal-binding</keyword>
<proteinExistence type="inferred from homology"/>
<reference key="1">
    <citation type="journal article" date="2006" name="DNA Res.">
        <title>Genome sequence of the cat pathogen, Chlamydophila felis.</title>
        <authorList>
            <person name="Azuma Y."/>
            <person name="Hirakawa H."/>
            <person name="Yamashita A."/>
            <person name="Cai Y."/>
            <person name="Rahman M.A."/>
            <person name="Suzuki H."/>
            <person name="Mitaku S."/>
            <person name="Toh H."/>
            <person name="Goto S."/>
            <person name="Murakami T."/>
            <person name="Sugi K."/>
            <person name="Hayashi H."/>
            <person name="Fukushi H."/>
            <person name="Hattori M."/>
            <person name="Kuhara S."/>
            <person name="Shirai M."/>
        </authorList>
    </citation>
    <scope>NUCLEOTIDE SEQUENCE [LARGE SCALE GENOMIC DNA]</scope>
    <source>
        <strain>Fe/C-56</strain>
    </source>
</reference>
<evidence type="ECO:0000255" key="1">
    <source>
        <dbReference type="HAMAP-Rule" id="MF_00107"/>
    </source>
</evidence>
<gene>
    <name evidence="1" type="primary">ispF</name>
    <name type="ordered locus">CF0812</name>
</gene>
<accession>Q253F4</accession>